<protein>
    <recommendedName>
        <fullName evidence="1">Histidine--tRNA ligase</fullName>
        <ecNumber evidence="1">6.1.1.21</ecNumber>
    </recommendedName>
    <alternativeName>
        <fullName evidence="1">Histidyl-tRNA synthetase</fullName>
        <shortName evidence="1">HisRS</shortName>
    </alternativeName>
</protein>
<feature type="chain" id="PRO_1000199160" description="Histidine--tRNA ligase">
    <location>
        <begin position="1"/>
        <end position="420"/>
    </location>
</feature>
<evidence type="ECO:0000255" key="1">
    <source>
        <dbReference type="HAMAP-Rule" id="MF_00127"/>
    </source>
</evidence>
<accession>B5YHK1</accession>
<reference key="1">
    <citation type="submission" date="2008-08" db="EMBL/GenBank/DDBJ databases">
        <title>The complete genome sequence of Thermodesulfovibrio yellowstonii strain ATCC 51303 / DSM 11347 / YP87.</title>
        <authorList>
            <person name="Dodson R.J."/>
            <person name="Durkin A.S."/>
            <person name="Wu M."/>
            <person name="Eisen J."/>
            <person name="Sutton G."/>
        </authorList>
    </citation>
    <scope>NUCLEOTIDE SEQUENCE [LARGE SCALE GENOMIC DNA]</scope>
    <source>
        <strain>ATCC 51303 / DSM 11347 / YP87</strain>
    </source>
</reference>
<gene>
    <name evidence="1" type="primary">hisS</name>
    <name type="ordered locus">THEYE_A1796</name>
</gene>
<name>SYH_THEYD</name>
<comment type="catalytic activity">
    <reaction evidence="1">
        <text>tRNA(His) + L-histidine + ATP = L-histidyl-tRNA(His) + AMP + diphosphate + H(+)</text>
        <dbReference type="Rhea" id="RHEA:17313"/>
        <dbReference type="Rhea" id="RHEA-COMP:9665"/>
        <dbReference type="Rhea" id="RHEA-COMP:9689"/>
        <dbReference type="ChEBI" id="CHEBI:15378"/>
        <dbReference type="ChEBI" id="CHEBI:30616"/>
        <dbReference type="ChEBI" id="CHEBI:33019"/>
        <dbReference type="ChEBI" id="CHEBI:57595"/>
        <dbReference type="ChEBI" id="CHEBI:78442"/>
        <dbReference type="ChEBI" id="CHEBI:78527"/>
        <dbReference type="ChEBI" id="CHEBI:456215"/>
        <dbReference type="EC" id="6.1.1.21"/>
    </reaction>
</comment>
<comment type="subunit">
    <text evidence="1">Homodimer.</text>
</comment>
<comment type="subcellular location">
    <subcellularLocation>
        <location evidence="1">Cytoplasm</location>
    </subcellularLocation>
</comment>
<comment type="similarity">
    <text evidence="1">Belongs to the class-II aminoacyl-tRNA synthetase family.</text>
</comment>
<sequence length="420" mass="48685">MKYSLLRGMQDIFSEQIYLWQHIEEHARKILENYNFQEIRTPIVENAELFLRSIGEDTDIVEKEMYVFQDKKGRKVALRPEGTASVVRAYIQHNFFNNPPPQKFYYIGPMFRYERPQKGRFRQFHQIGVECFGVSSSWIDAELIYMLKLFLEKLNINNLTYEINSLGCKRCRPQYRKVLFSFLADKVNQLCIDCKRRFEKNPLRVLDCKVPSCKESLKNTPLIVDFLCQDCKEHFLSLQKELDEMNISYAVNPKIVRGLDYYTRTVFEVTTTMLGAQNAVAAGGRYDDLVELFGGPTTPAAGFAIGMERLIEICSNSLLIKPKKPFVYVAYIGSSVEKEAKKVVNFLRNNNIPTETAYEKLSLKSQLRKADRVGANIVIIIGEDEIKKSVYIWKNMKDGSQGEASLNELLELIRRKYDTE</sequence>
<proteinExistence type="inferred from homology"/>
<dbReference type="EC" id="6.1.1.21" evidence="1"/>
<dbReference type="EMBL" id="CP001147">
    <property type="protein sequence ID" value="ACI20411.1"/>
    <property type="molecule type" value="Genomic_DNA"/>
</dbReference>
<dbReference type="RefSeq" id="WP_012545147.1">
    <property type="nucleotide sequence ID" value="NC_011296.1"/>
</dbReference>
<dbReference type="RefSeq" id="YP_002249587.1">
    <property type="nucleotide sequence ID" value="NC_011296.1"/>
</dbReference>
<dbReference type="SMR" id="B5YHK1"/>
<dbReference type="FunCoup" id="B5YHK1">
    <property type="interactions" value="403"/>
</dbReference>
<dbReference type="STRING" id="289376.THEYE_A1796"/>
<dbReference type="EnsemblBacteria" id="ACI20411">
    <property type="protein sequence ID" value="ACI20411"/>
    <property type="gene ID" value="THEYE_A1796"/>
</dbReference>
<dbReference type="KEGG" id="tye:THEYE_A1796"/>
<dbReference type="PATRIC" id="fig|289376.4.peg.1752"/>
<dbReference type="eggNOG" id="COG0124">
    <property type="taxonomic scope" value="Bacteria"/>
</dbReference>
<dbReference type="HOGENOM" id="CLU_025113_1_1_0"/>
<dbReference type="InParanoid" id="B5YHK1"/>
<dbReference type="OrthoDB" id="9800814at2"/>
<dbReference type="Proteomes" id="UP000000718">
    <property type="component" value="Chromosome"/>
</dbReference>
<dbReference type="GO" id="GO:0005737">
    <property type="term" value="C:cytoplasm"/>
    <property type="evidence" value="ECO:0007669"/>
    <property type="project" value="UniProtKB-SubCell"/>
</dbReference>
<dbReference type="GO" id="GO:0005524">
    <property type="term" value="F:ATP binding"/>
    <property type="evidence" value="ECO:0007669"/>
    <property type="project" value="UniProtKB-UniRule"/>
</dbReference>
<dbReference type="GO" id="GO:0004821">
    <property type="term" value="F:histidine-tRNA ligase activity"/>
    <property type="evidence" value="ECO:0000318"/>
    <property type="project" value="GO_Central"/>
</dbReference>
<dbReference type="GO" id="GO:0006427">
    <property type="term" value="P:histidyl-tRNA aminoacylation"/>
    <property type="evidence" value="ECO:0000318"/>
    <property type="project" value="GO_Central"/>
</dbReference>
<dbReference type="CDD" id="cd00773">
    <property type="entry name" value="HisRS-like_core"/>
    <property type="match status" value="1"/>
</dbReference>
<dbReference type="CDD" id="cd00859">
    <property type="entry name" value="HisRS_anticodon"/>
    <property type="match status" value="1"/>
</dbReference>
<dbReference type="FunFam" id="3.30.930.10:FF:000005">
    <property type="entry name" value="Histidine--tRNA ligase"/>
    <property type="match status" value="1"/>
</dbReference>
<dbReference type="FunFam" id="3.40.50.800:FF:000065">
    <property type="entry name" value="Histidine--tRNA ligase protein"/>
    <property type="match status" value="1"/>
</dbReference>
<dbReference type="Gene3D" id="3.40.50.800">
    <property type="entry name" value="Anticodon-binding domain"/>
    <property type="match status" value="1"/>
</dbReference>
<dbReference type="Gene3D" id="3.30.930.10">
    <property type="entry name" value="Bira Bifunctional Protein, Domain 2"/>
    <property type="match status" value="1"/>
</dbReference>
<dbReference type="HAMAP" id="MF_00127">
    <property type="entry name" value="His_tRNA_synth"/>
    <property type="match status" value="1"/>
</dbReference>
<dbReference type="InterPro" id="IPR006195">
    <property type="entry name" value="aa-tRNA-synth_II"/>
</dbReference>
<dbReference type="InterPro" id="IPR045864">
    <property type="entry name" value="aa-tRNA-synth_II/BPL/LPL"/>
</dbReference>
<dbReference type="InterPro" id="IPR004154">
    <property type="entry name" value="Anticodon-bd"/>
</dbReference>
<dbReference type="InterPro" id="IPR036621">
    <property type="entry name" value="Anticodon-bd_dom_sf"/>
</dbReference>
<dbReference type="InterPro" id="IPR015807">
    <property type="entry name" value="His-tRNA-ligase"/>
</dbReference>
<dbReference type="InterPro" id="IPR041715">
    <property type="entry name" value="HisRS-like_core"/>
</dbReference>
<dbReference type="InterPro" id="IPR004516">
    <property type="entry name" value="HisRS/HisZ"/>
</dbReference>
<dbReference type="InterPro" id="IPR033656">
    <property type="entry name" value="HisRS_anticodon"/>
</dbReference>
<dbReference type="NCBIfam" id="TIGR00442">
    <property type="entry name" value="hisS"/>
    <property type="match status" value="1"/>
</dbReference>
<dbReference type="PANTHER" id="PTHR43707:SF1">
    <property type="entry name" value="HISTIDINE--TRNA LIGASE, MITOCHONDRIAL-RELATED"/>
    <property type="match status" value="1"/>
</dbReference>
<dbReference type="PANTHER" id="PTHR43707">
    <property type="entry name" value="HISTIDYL-TRNA SYNTHETASE"/>
    <property type="match status" value="1"/>
</dbReference>
<dbReference type="Pfam" id="PF03129">
    <property type="entry name" value="HGTP_anticodon"/>
    <property type="match status" value="1"/>
</dbReference>
<dbReference type="Pfam" id="PF13393">
    <property type="entry name" value="tRNA-synt_His"/>
    <property type="match status" value="1"/>
</dbReference>
<dbReference type="PIRSF" id="PIRSF001549">
    <property type="entry name" value="His-tRNA_synth"/>
    <property type="match status" value="1"/>
</dbReference>
<dbReference type="SUPFAM" id="SSF52954">
    <property type="entry name" value="Class II aaRS ABD-related"/>
    <property type="match status" value="1"/>
</dbReference>
<dbReference type="SUPFAM" id="SSF55681">
    <property type="entry name" value="Class II aaRS and biotin synthetases"/>
    <property type="match status" value="1"/>
</dbReference>
<dbReference type="PROSITE" id="PS50862">
    <property type="entry name" value="AA_TRNA_LIGASE_II"/>
    <property type="match status" value="1"/>
</dbReference>
<organism>
    <name type="scientific">Thermodesulfovibrio yellowstonii (strain ATCC 51303 / DSM 11347 / YP87)</name>
    <dbReference type="NCBI Taxonomy" id="289376"/>
    <lineage>
        <taxon>Bacteria</taxon>
        <taxon>Pseudomonadati</taxon>
        <taxon>Nitrospirota</taxon>
        <taxon>Thermodesulfovibrionia</taxon>
        <taxon>Thermodesulfovibrionales</taxon>
        <taxon>Thermodesulfovibrionaceae</taxon>
        <taxon>Thermodesulfovibrio</taxon>
    </lineage>
</organism>
<keyword id="KW-0030">Aminoacyl-tRNA synthetase</keyword>
<keyword id="KW-0067">ATP-binding</keyword>
<keyword id="KW-0963">Cytoplasm</keyword>
<keyword id="KW-0436">Ligase</keyword>
<keyword id="KW-0547">Nucleotide-binding</keyword>
<keyword id="KW-0648">Protein biosynthesis</keyword>
<keyword id="KW-1185">Reference proteome</keyword>